<sequence length="351" mass="37679">MMTVRDPRFPSSSTTAIQSDAAIKFCDTTLRDGEQAPGVAFTAAEKLAIAAALDAIGVHQIEAGIPAMGVTERDVLREILATDPHADIVGWCRADHRDVEAAASCGLVTAHLTIPVSDLHLKSKLGRDRAWARLRVRDCVADATDRGMRVSVGFEDASRADDAFVTDLAGELRELGVTRLRWADTVGLLDPVSAHDRLGRLVRAVPGPWEIHAHDDFGLATANTIAAVQAGFTWVSTTVLGLGERAGNAPIEEVAMALRHLLKLPVDLDTTSFRSLARLVSRAARRPLPAGKAVVGESVFAHESGIHVHGILRHPATYEPFDPAEVGGRRRLAIGKHSGRASVRYALEQYG</sequence>
<evidence type="ECO:0000255" key="1">
    <source>
        <dbReference type="PROSITE-ProRule" id="PRU01151"/>
    </source>
</evidence>
<evidence type="ECO:0000305" key="2"/>
<proteinExistence type="inferred from homology"/>
<comment type="function">
    <text>This protein is a Fe-Mo-cofactor biosynthetic component.</text>
</comment>
<comment type="catalytic activity">
    <reaction>
        <text>acetyl-CoA + 2-oxoglutarate + H2O = (2R)-homocitrate + CoA + H(+)</text>
        <dbReference type="Rhea" id="RHEA:12929"/>
        <dbReference type="ChEBI" id="CHEBI:15377"/>
        <dbReference type="ChEBI" id="CHEBI:15378"/>
        <dbReference type="ChEBI" id="CHEBI:16810"/>
        <dbReference type="ChEBI" id="CHEBI:57287"/>
        <dbReference type="ChEBI" id="CHEBI:57288"/>
        <dbReference type="ChEBI" id="CHEBI:58884"/>
        <dbReference type="EC" id="2.3.3.14"/>
    </reaction>
</comment>
<comment type="similarity">
    <text evidence="2">Belongs to the alpha-IPM synthase/homocitrate synthase family.</text>
</comment>
<dbReference type="EC" id="2.3.3.14"/>
<dbReference type="EMBL" id="L41344">
    <property type="protein sequence ID" value="AAA96261.1"/>
    <property type="molecule type" value="Genomic_DNA"/>
</dbReference>
<dbReference type="SMR" id="Q47884"/>
<dbReference type="GO" id="GO:0004410">
    <property type="term" value="F:homocitrate synthase activity"/>
    <property type="evidence" value="ECO:0007669"/>
    <property type="project" value="UniProtKB-EC"/>
</dbReference>
<dbReference type="GO" id="GO:0009058">
    <property type="term" value="P:biosynthetic process"/>
    <property type="evidence" value="ECO:0007669"/>
    <property type="project" value="UniProtKB-ARBA"/>
</dbReference>
<dbReference type="GO" id="GO:0019752">
    <property type="term" value="P:carboxylic acid metabolic process"/>
    <property type="evidence" value="ECO:0007669"/>
    <property type="project" value="InterPro"/>
</dbReference>
<dbReference type="GO" id="GO:0009399">
    <property type="term" value="P:nitrogen fixation"/>
    <property type="evidence" value="ECO:0007669"/>
    <property type="project" value="UniProtKB-KW"/>
</dbReference>
<dbReference type="CDD" id="cd07939">
    <property type="entry name" value="DRE_TIM_NifV"/>
    <property type="match status" value="1"/>
</dbReference>
<dbReference type="Gene3D" id="1.10.238.260">
    <property type="match status" value="1"/>
</dbReference>
<dbReference type="Gene3D" id="3.20.20.70">
    <property type="entry name" value="Aldolase class I"/>
    <property type="match status" value="1"/>
</dbReference>
<dbReference type="InterPro" id="IPR002034">
    <property type="entry name" value="AIPM/Hcit_synth_CS"/>
</dbReference>
<dbReference type="InterPro" id="IPR013785">
    <property type="entry name" value="Aldolase_TIM"/>
</dbReference>
<dbReference type="InterPro" id="IPR054691">
    <property type="entry name" value="LeuA/HCS_post-cat"/>
</dbReference>
<dbReference type="InterPro" id="IPR013477">
    <property type="entry name" value="NifV/FrbC"/>
</dbReference>
<dbReference type="InterPro" id="IPR000891">
    <property type="entry name" value="PYR_CT"/>
</dbReference>
<dbReference type="NCBIfam" id="TIGR02660">
    <property type="entry name" value="nifV_homocitr"/>
    <property type="match status" value="1"/>
</dbReference>
<dbReference type="PANTHER" id="PTHR42880">
    <property type="entry name" value="HOMOCITRATE SYNTHASE"/>
    <property type="match status" value="1"/>
</dbReference>
<dbReference type="PANTHER" id="PTHR42880:SF1">
    <property type="entry name" value="ISOPROPYLMALATE_HOMOCITRATE_CITRAMALATE SYNTHASE FAMILY PROTEIN"/>
    <property type="match status" value="1"/>
</dbReference>
<dbReference type="Pfam" id="PF22617">
    <property type="entry name" value="HCS_D2"/>
    <property type="match status" value="1"/>
</dbReference>
<dbReference type="Pfam" id="PF00682">
    <property type="entry name" value="HMGL-like"/>
    <property type="match status" value="1"/>
</dbReference>
<dbReference type="SUPFAM" id="SSF51569">
    <property type="entry name" value="Aldolase"/>
    <property type="match status" value="1"/>
</dbReference>
<dbReference type="PROSITE" id="PS00815">
    <property type="entry name" value="AIPM_HOMOCIT_SYNTH_1"/>
    <property type="match status" value="1"/>
</dbReference>
<dbReference type="PROSITE" id="PS00816">
    <property type="entry name" value="AIPM_HOMOCIT_SYNTH_2"/>
    <property type="match status" value="1"/>
</dbReference>
<dbReference type="PROSITE" id="PS50991">
    <property type="entry name" value="PYR_CT"/>
    <property type="match status" value="1"/>
</dbReference>
<name>NIFV_FRAAL</name>
<reference key="1">
    <citation type="submission" date="1996-04" db="EMBL/GenBank/DDBJ databases">
        <authorList>
            <person name="Specq A."/>
            <person name="Normand P."/>
        </authorList>
    </citation>
    <scope>NUCLEOTIDE SEQUENCE [GENOMIC DNA]</scope>
    <source>
        <strain>ARI3</strain>
    </source>
</reference>
<gene>
    <name type="primary">nifV</name>
</gene>
<feature type="chain" id="PRO_0000140462" description="Homocitrate synthase">
    <location>
        <begin position="1"/>
        <end position="351"/>
    </location>
</feature>
<feature type="domain" description="Pyruvate carboxyltransferase" evidence="1">
    <location>
        <begin position="23"/>
        <end position="272"/>
    </location>
</feature>
<keyword id="KW-0535">Nitrogen fixation</keyword>
<keyword id="KW-0808">Transferase</keyword>
<protein>
    <recommendedName>
        <fullName>Homocitrate synthase</fullName>
        <ecNumber>2.3.3.14</ecNumber>
    </recommendedName>
</protein>
<organism>
    <name type="scientific">Frankia alni</name>
    <dbReference type="NCBI Taxonomy" id="1859"/>
    <lineage>
        <taxon>Bacteria</taxon>
        <taxon>Bacillati</taxon>
        <taxon>Actinomycetota</taxon>
        <taxon>Actinomycetes</taxon>
        <taxon>Frankiales</taxon>
        <taxon>Frankiaceae</taxon>
        <taxon>Frankia</taxon>
    </lineage>
</organism>
<accession>Q47884</accession>